<keyword id="KW-0028">Amino-acid biosynthesis</keyword>
<keyword id="KW-0055">Arginine biosynthesis</keyword>
<keyword id="KW-0067">ATP-binding</keyword>
<keyword id="KW-0436">Ligase</keyword>
<keyword id="KW-0460">Magnesium</keyword>
<keyword id="KW-0464">Manganese</keyword>
<keyword id="KW-0479">Metal-binding</keyword>
<keyword id="KW-0547">Nucleotide-binding</keyword>
<keyword id="KW-0665">Pyrimidine biosynthesis</keyword>
<keyword id="KW-1185">Reference proteome</keyword>
<keyword id="KW-0677">Repeat</keyword>
<sequence>MPKRTDIKKVLLIGSGPIQIGQAAEFDFSGSQACRSLKEEGIEVVLVNSNPATIMTDPDMADQIYIEPLRANIIAKIIEKERPDGILSGMGGQTGLNLTAELAEMGALKGVEILGTPLEAIYKGEDREKFRDLMNEIGEPVPKSIVLNTLSQIDDAIAKIGLPAVVRPAYTLGGAGGGIGRTREELTRIVELGLSRSRIHQVLIEESVMGWKELEFEVMRDSTDTCIIVCSMENVDPMGIHTGESVVVAPILTLRDDEFQMMRSAAIHIIRALDVQGGCNIQFAFKDGDYRVIEVNPRVSRSSALASKATGYPIARVAAKIAIGLRLDEIKNSVTGCTAASFEPTIDYIVVKVPRWPFDKFKGADRTLTTSMKSTGEVMAIGRTLEESFMKAKRSIDTDVRTHTSPSEIRMILSRPTDERFHCLFDAFRQGFTLDEIAGLTSIVPFFLEKIKNIVDLEKRLAAGCTDEDIFLAKRYGFANTEIAALTGRGADTIEALVGAPAYKMVDTCAAEFPASTPYFYSTREGTSEIVRDKKQKILILGSGPIRIGQGIEFDYCTVHAVKALREEGVEVHIVNNNPETVSTDFDTSDRLFFEPMLLEDVTNILMTDEYYGVMVQFGGQNAVNLAVPLEKELKRRGMCTRILGTSPDAMDIAEDRDRFSVLLTTLQIPSPANSSAYSEAEAREKAERIGYPVLVRPSYVLGGRAMEIVHNTAELETYMKEAVRVSQHHPVLIDSYLRNAIELDVDAVCDGKEVLIGGIMEHIEQAGIHSGDSACVIPTQSLSPEVIATVREYTKKIALGLGVVGLVNIQMAVKDNVVYILEANPRASRTVPFVSKATGLPIAKIAAKVMIGKKLCDLGFHEAKIRHVAVKEVLLPFNKLAGVDTILGPEMKSTGEVMGIDYDFGLAFYKACISADNELPLKGNVFVSVNIGQKDEVIPIARRLRDLGLTLYGTEGTVDYLHEAGVEAHLVRKVQEGSPNVLDMMHHGEIRLIINTPQDRQSRQDHYQIMRAAVDFQIPYITTLQAARAAALAIDAIKREKITLEPLSHYLR</sequence>
<comment type="function">
    <text evidence="1">Large subunit of the glutamine-dependent carbamoyl phosphate synthetase (CPSase). CPSase catalyzes the formation of carbamoyl phosphate from the ammonia moiety of glutamine, carbonate, and phosphate donated by ATP, constituting the first step of 2 biosynthetic pathways, one leading to arginine and/or urea and the other to pyrimidine nucleotides. The large subunit (synthetase) binds the substrates ammonia (free or transferred from glutamine from the small subunit), hydrogencarbonate and ATP and carries out an ATP-coupled ligase reaction, activating hydrogencarbonate by forming carboxy phosphate which reacts with ammonia to form carbamoyl phosphate.</text>
</comment>
<comment type="catalytic activity">
    <reaction evidence="1">
        <text>hydrogencarbonate + L-glutamine + 2 ATP + H2O = carbamoyl phosphate + L-glutamate + 2 ADP + phosphate + 2 H(+)</text>
        <dbReference type="Rhea" id="RHEA:18633"/>
        <dbReference type="ChEBI" id="CHEBI:15377"/>
        <dbReference type="ChEBI" id="CHEBI:15378"/>
        <dbReference type="ChEBI" id="CHEBI:17544"/>
        <dbReference type="ChEBI" id="CHEBI:29985"/>
        <dbReference type="ChEBI" id="CHEBI:30616"/>
        <dbReference type="ChEBI" id="CHEBI:43474"/>
        <dbReference type="ChEBI" id="CHEBI:58228"/>
        <dbReference type="ChEBI" id="CHEBI:58359"/>
        <dbReference type="ChEBI" id="CHEBI:456216"/>
        <dbReference type="EC" id="6.3.5.5"/>
    </reaction>
</comment>
<comment type="catalytic activity">
    <molecule>Carbamoyl phosphate synthase large chain</molecule>
    <reaction evidence="1">
        <text>hydrogencarbonate + NH4(+) + 2 ATP = carbamoyl phosphate + 2 ADP + phosphate + 2 H(+)</text>
        <dbReference type="Rhea" id="RHEA:18029"/>
        <dbReference type="ChEBI" id="CHEBI:15378"/>
        <dbReference type="ChEBI" id="CHEBI:17544"/>
        <dbReference type="ChEBI" id="CHEBI:28938"/>
        <dbReference type="ChEBI" id="CHEBI:30616"/>
        <dbReference type="ChEBI" id="CHEBI:43474"/>
        <dbReference type="ChEBI" id="CHEBI:58228"/>
        <dbReference type="ChEBI" id="CHEBI:456216"/>
        <dbReference type="EC" id="6.3.4.16"/>
    </reaction>
</comment>
<comment type="cofactor">
    <cofactor evidence="1">
        <name>Mg(2+)</name>
        <dbReference type="ChEBI" id="CHEBI:18420"/>
    </cofactor>
    <cofactor evidence="1">
        <name>Mn(2+)</name>
        <dbReference type="ChEBI" id="CHEBI:29035"/>
    </cofactor>
    <text evidence="1">Binds 4 Mg(2+) or Mn(2+) ions per subunit.</text>
</comment>
<comment type="pathway">
    <text evidence="1">Amino-acid biosynthesis; L-arginine biosynthesis; carbamoyl phosphate from bicarbonate: step 1/1.</text>
</comment>
<comment type="pathway">
    <text evidence="1">Pyrimidine metabolism; UMP biosynthesis via de novo pathway; (S)-dihydroorotate from bicarbonate: step 1/3.</text>
</comment>
<comment type="subunit">
    <text evidence="1">Composed of two chains; the small (or glutamine) chain promotes the hydrolysis of glutamine to ammonia, which is used by the large (or ammonia) chain to synthesize carbamoyl phosphate. Tetramer of heterodimers (alpha,beta)4.</text>
</comment>
<comment type="domain">
    <text evidence="1">The large subunit is composed of 2 ATP-grasp domains that are involved in binding the 2 ATP molecules needed for carbamoyl phosphate synthesis. The N-terminal ATP-grasp domain (referred to as the carboxyphosphate synthetic component) catalyzes the ATP-dependent phosphorylation of hydrogencarbonate to carboxyphosphate and the subsequent nucleophilic attack by ammonia to form a carbamate intermediate. The C-terminal ATP-grasp domain (referred to as the carbamoyl phosphate synthetic component) then catalyzes the phosphorylation of carbamate with the second ATP to form the end product carbamoyl phosphate. The reactive and unstable enzyme intermediates are sequentially channeled from one active site to the next through the interior of the protein over a distance of at least 96 A.</text>
</comment>
<comment type="similarity">
    <text evidence="1">Belongs to the CarB family.</text>
</comment>
<dbReference type="EC" id="6.3.4.16" evidence="1"/>
<dbReference type="EC" id="6.3.5.5" evidence="1"/>
<dbReference type="EMBL" id="CP000780">
    <property type="protein sequence ID" value="ABS55352.1"/>
    <property type="molecule type" value="Genomic_DNA"/>
</dbReference>
<dbReference type="RefSeq" id="WP_012106376.1">
    <property type="nucleotide sequence ID" value="NC_009712.1"/>
</dbReference>
<dbReference type="SMR" id="A7I6J1"/>
<dbReference type="STRING" id="456442.Mboo_0834"/>
<dbReference type="GeneID" id="5410464"/>
<dbReference type="KEGG" id="mbn:Mboo_0834"/>
<dbReference type="eggNOG" id="arCOG01594">
    <property type="taxonomic scope" value="Archaea"/>
</dbReference>
<dbReference type="HOGENOM" id="CLU_000513_1_0_2"/>
<dbReference type="OrthoDB" id="85487at2157"/>
<dbReference type="UniPathway" id="UPA00068">
    <property type="reaction ID" value="UER00171"/>
</dbReference>
<dbReference type="UniPathway" id="UPA00070">
    <property type="reaction ID" value="UER00115"/>
</dbReference>
<dbReference type="Proteomes" id="UP000002408">
    <property type="component" value="Chromosome"/>
</dbReference>
<dbReference type="GO" id="GO:0005737">
    <property type="term" value="C:cytoplasm"/>
    <property type="evidence" value="ECO:0007669"/>
    <property type="project" value="TreeGrafter"/>
</dbReference>
<dbReference type="GO" id="GO:0005524">
    <property type="term" value="F:ATP binding"/>
    <property type="evidence" value="ECO:0007669"/>
    <property type="project" value="UniProtKB-UniRule"/>
</dbReference>
<dbReference type="GO" id="GO:0004087">
    <property type="term" value="F:carbamoyl-phosphate synthase (ammonia) activity"/>
    <property type="evidence" value="ECO:0007669"/>
    <property type="project" value="RHEA"/>
</dbReference>
<dbReference type="GO" id="GO:0004088">
    <property type="term" value="F:carbamoyl-phosphate synthase (glutamine-hydrolyzing) activity"/>
    <property type="evidence" value="ECO:0007669"/>
    <property type="project" value="UniProtKB-UniRule"/>
</dbReference>
<dbReference type="GO" id="GO:0046872">
    <property type="term" value="F:metal ion binding"/>
    <property type="evidence" value="ECO:0007669"/>
    <property type="project" value="UniProtKB-KW"/>
</dbReference>
<dbReference type="GO" id="GO:0044205">
    <property type="term" value="P:'de novo' UMP biosynthetic process"/>
    <property type="evidence" value="ECO:0007669"/>
    <property type="project" value="UniProtKB-UniRule"/>
</dbReference>
<dbReference type="GO" id="GO:0006541">
    <property type="term" value="P:glutamine metabolic process"/>
    <property type="evidence" value="ECO:0007669"/>
    <property type="project" value="TreeGrafter"/>
</dbReference>
<dbReference type="GO" id="GO:0006526">
    <property type="term" value="P:L-arginine biosynthetic process"/>
    <property type="evidence" value="ECO:0007669"/>
    <property type="project" value="UniProtKB-UniRule"/>
</dbReference>
<dbReference type="CDD" id="cd01424">
    <property type="entry name" value="MGS_CPS_II"/>
    <property type="match status" value="1"/>
</dbReference>
<dbReference type="FunFam" id="1.10.1030.10:FF:000002">
    <property type="entry name" value="Carbamoyl-phosphate synthase large chain"/>
    <property type="match status" value="1"/>
</dbReference>
<dbReference type="FunFam" id="3.30.1490.20:FF:000001">
    <property type="entry name" value="Carbamoyl-phosphate synthase large chain"/>
    <property type="match status" value="1"/>
</dbReference>
<dbReference type="FunFam" id="3.30.470.20:FF:000001">
    <property type="entry name" value="Carbamoyl-phosphate synthase large chain"/>
    <property type="match status" value="1"/>
</dbReference>
<dbReference type="FunFam" id="3.30.470.20:FF:000013">
    <property type="entry name" value="Carbamoyl-phosphate synthase large chain"/>
    <property type="match status" value="1"/>
</dbReference>
<dbReference type="FunFam" id="3.40.50.20:FF:000001">
    <property type="entry name" value="Carbamoyl-phosphate synthase large chain"/>
    <property type="match status" value="2"/>
</dbReference>
<dbReference type="Gene3D" id="3.40.50.20">
    <property type="match status" value="2"/>
</dbReference>
<dbReference type="Gene3D" id="3.30.1490.20">
    <property type="entry name" value="ATP-grasp fold, A domain"/>
    <property type="match status" value="1"/>
</dbReference>
<dbReference type="Gene3D" id="3.30.470.20">
    <property type="entry name" value="ATP-grasp fold, B domain"/>
    <property type="match status" value="2"/>
</dbReference>
<dbReference type="Gene3D" id="1.10.1030.10">
    <property type="entry name" value="Carbamoyl-phosphate synthetase, large subunit oligomerisation domain"/>
    <property type="match status" value="1"/>
</dbReference>
<dbReference type="Gene3D" id="3.40.50.1380">
    <property type="entry name" value="Methylglyoxal synthase-like domain"/>
    <property type="match status" value="1"/>
</dbReference>
<dbReference type="HAMAP" id="MF_01210_A">
    <property type="entry name" value="CPSase_L_chain_A"/>
    <property type="match status" value="1"/>
</dbReference>
<dbReference type="HAMAP" id="MF_01210_B">
    <property type="entry name" value="CPSase_L_chain_B"/>
    <property type="match status" value="1"/>
</dbReference>
<dbReference type="InterPro" id="IPR011761">
    <property type="entry name" value="ATP-grasp"/>
</dbReference>
<dbReference type="InterPro" id="IPR013815">
    <property type="entry name" value="ATP_grasp_subdomain_1"/>
</dbReference>
<dbReference type="InterPro" id="IPR006275">
    <property type="entry name" value="CarbamoylP_synth_lsu"/>
</dbReference>
<dbReference type="InterPro" id="IPR005480">
    <property type="entry name" value="CarbamoylP_synth_lsu_oligo"/>
</dbReference>
<dbReference type="InterPro" id="IPR036897">
    <property type="entry name" value="CarbamoylP_synth_lsu_oligo_sf"/>
</dbReference>
<dbReference type="InterPro" id="IPR005479">
    <property type="entry name" value="CbamoylP_synth_lsu-like_ATP-bd"/>
</dbReference>
<dbReference type="InterPro" id="IPR005483">
    <property type="entry name" value="CbamoylP_synth_lsu_CPSase_dom"/>
</dbReference>
<dbReference type="InterPro" id="IPR011607">
    <property type="entry name" value="MGS-like_dom"/>
</dbReference>
<dbReference type="InterPro" id="IPR036914">
    <property type="entry name" value="MGS-like_dom_sf"/>
</dbReference>
<dbReference type="InterPro" id="IPR033937">
    <property type="entry name" value="MGS_CPS_CarB"/>
</dbReference>
<dbReference type="InterPro" id="IPR016185">
    <property type="entry name" value="PreATP-grasp_dom_sf"/>
</dbReference>
<dbReference type="NCBIfam" id="TIGR01369">
    <property type="entry name" value="CPSaseII_lrg"/>
    <property type="match status" value="1"/>
</dbReference>
<dbReference type="NCBIfam" id="NF003671">
    <property type="entry name" value="PRK05294.1"/>
    <property type="match status" value="1"/>
</dbReference>
<dbReference type="NCBIfam" id="NF009455">
    <property type="entry name" value="PRK12815.1"/>
    <property type="match status" value="1"/>
</dbReference>
<dbReference type="PANTHER" id="PTHR11405:SF53">
    <property type="entry name" value="CARBAMOYL-PHOSPHATE SYNTHASE [AMMONIA], MITOCHONDRIAL"/>
    <property type="match status" value="1"/>
</dbReference>
<dbReference type="PANTHER" id="PTHR11405">
    <property type="entry name" value="CARBAMOYLTRANSFERASE FAMILY MEMBER"/>
    <property type="match status" value="1"/>
</dbReference>
<dbReference type="Pfam" id="PF02786">
    <property type="entry name" value="CPSase_L_D2"/>
    <property type="match status" value="2"/>
</dbReference>
<dbReference type="Pfam" id="PF02787">
    <property type="entry name" value="CPSase_L_D3"/>
    <property type="match status" value="1"/>
</dbReference>
<dbReference type="Pfam" id="PF02142">
    <property type="entry name" value="MGS"/>
    <property type="match status" value="1"/>
</dbReference>
<dbReference type="PRINTS" id="PR00098">
    <property type="entry name" value="CPSASE"/>
</dbReference>
<dbReference type="SMART" id="SM01096">
    <property type="entry name" value="CPSase_L_D3"/>
    <property type="match status" value="1"/>
</dbReference>
<dbReference type="SMART" id="SM00851">
    <property type="entry name" value="MGS"/>
    <property type="match status" value="1"/>
</dbReference>
<dbReference type="SUPFAM" id="SSF48108">
    <property type="entry name" value="Carbamoyl phosphate synthetase, large subunit connection domain"/>
    <property type="match status" value="1"/>
</dbReference>
<dbReference type="SUPFAM" id="SSF56059">
    <property type="entry name" value="Glutathione synthetase ATP-binding domain-like"/>
    <property type="match status" value="2"/>
</dbReference>
<dbReference type="SUPFAM" id="SSF52335">
    <property type="entry name" value="Methylglyoxal synthase-like"/>
    <property type="match status" value="1"/>
</dbReference>
<dbReference type="SUPFAM" id="SSF52440">
    <property type="entry name" value="PreATP-grasp domain"/>
    <property type="match status" value="2"/>
</dbReference>
<dbReference type="PROSITE" id="PS50975">
    <property type="entry name" value="ATP_GRASP"/>
    <property type="match status" value="2"/>
</dbReference>
<dbReference type="PROSITE" id="PS00866">
    <property type="entry name" value="CPSASE_1"/>
    <property type="match status" value="1"/>
</dbReference>
<dbReference type="PROSITE" id="PS00867">
    <property type="entry name" value="CPSASE_2"/>
    <property type="match status" value="2"/>
</dbReference>
<dbReference type="PROSITE" id="PS51855">
    <property type="entry name" value="MGS"/>
    <property type="match status" value="1"/>
</dbReference>
<gene>
    <name evidence="1" type="primary">carB</name>
    <name type="ordered locus">Mboo_0834</name>
</gene>
<accession>A7I6J1</accession>
<protein>
    <recommendedName>
        <fullName evidence="1">Carbamoyl phosphate synthase large chain</fullName>
        <ecNumber evidence="1">6.3.4.16</ecNumber>
        <ecNumber evidence="1">6.3.5.5</ecNumber>
    </recommendedName>
    <alternativeName>
        <fullName evidence="1">Carbamoyl phosphate synthetase ammonia chain</fullName>
    </alternativeName>
</protein>
<reference key="1">
    <citation type="journal article" date="2015" name="Microbiology">
        <title>Genome of Methanoregula boonei 6A8 reveals adaptations to oligotrophic peatland environments.</title>
        <authorList>
            <person name="Braeuer S."/>
            <person name="Cadillo-Quiroz H."/>
            <person name="Kyrpides N."/>
            <person name="Woyke T."/>
            <person name="Goodwin L."/>
            <person name="Detter C."/>
            <person name="Podell S."/>
            <person name="Yavitt J.B."/>
            <person name="Zinder S.H."/>
        </authorList>
    </citation>
    <scope>NUCLEOTIDE SEQUENCE [LARGE SCALE GENOMIC DNA]</scope>
    <source>
        <strain>DSM 21154 / JCM 14090 / 6A8</strain>
    </source>
</reference>
<feature type="chain" id="PRO_1000066362" description="Carbamoyl phosphate synthase large chain">
    <location>
        <begin position="1"/>
        <end position="1053"/>
    </location>
</feature>
<feature type="domain" description="ATP-grasp 1" evidence="1">
    <location>
        <begin position="131"/>
        <end position="323"/>
    </location>
</feature>
<feature type="domain" description="ATP-grasp 2" evidence="1">
    <location>
        <begin position="661"/>
        <end position="852"/>
    </location>
</feature>
<feature type="domain" description="MGS-like" evidence="1">
    <location>
        <begin position="918"/>
        <end position="1053"/>
    </location>
</feature>
<feature type="region of interest" description="Carboxyphosphate synthetic domain" evidence="1">
    <location>
        <begin position="1"/>
        <end position="397"/>
    </location>
</feature>
<feature type="region of interest" description="Oligomerization domain" evidence="1">
    <location>
        <begin position="398"/>
        <end position="530"/>
    </location>
</feature>
<feature type="region of interest" description="Carbamoyl phosphate synthetic domain" evidence="1">
    <location>
        <begin position="531"/>
        <end position="919"/>
    </location>
</feature>
<feature type="region of interest" description="Allosteric domain" evidence="1">
    <location>
        <begin position="920"/>
        <end position="1053"/>
    </location>
</feature>
<feature type="binding site" evidence="1">
    <location>
        <position position="127"/>
    </location>
    <ligand>
        <name>ATP</name>
        <dbReference type="ChEBI" id="CHEBI:30616"/>
        <label>1</label>
    </ligand>
</feature>
<feature type="binding site" evidence="1">
    <location>
        <position position="167"/>
    </location>
    <ligand>
        <name>ATP</name>
        <dbReference type="ChEBI" id="CHEBI:30616"/>
        <label>1</label>
    </ligand>
</feature>
<feature type="binding site" evidence="1">
    <location>
        <position position="173"/>
    </location>
    <ligand>
        <name>ATP</name>
        <dbReference type="ChEBI" id="CHEBI:30616"/>
        <label>1</label>
    </ligand>
</feature>
<feature type="binding site" evidence="1">
    <location>
        <position position="174"/>
    </location>
    <ligand>
        <name>ATP</name>
        <dbReference type="ChEBI" id="CHEBI:30616"/>
        <label>1</label>
    </ligand>
</feature>
<feature type="binding site" evidence="1">
    <location>
        <position position="206"/>
    </location>
    <ligand>
        <name>ATP</name>
        <dbReference type="ChEBI" id="CHEBI:30616"/>
        <label>1</label>
    </ligand>
</feature>
<feature type="binding site" evidence="1">
    <location>
        <position position="208"/>
    </location>
    <ligand>
        <name>ATP</name>
        <dbReference type="ChEBI" id="CHEBI:30616"/>
        <label>1</label>
    </ligand>
</feature>
<feature type="binding site" evidence="1">
    <location>
        <position position="213"/>
    </location>
    <ligand>
        <name>ATP</name>
        <dbReference type="ChEBI" id="CHEBI:30616"/>
        <label>1</label>
    </ligand>
</feature>
<feature type="binding site" evidence="1">
    <location>
        <position position="239"/>
    </location>
    <ligand>
        <name>ATP</name>
        <dbReference type="ChEBI" id="CHEBI:30616"/>
        <label>1</label>
    </ligand>
</feature>
<feature type="binding site" evidence="1">
    <location>
        <position position="240"/>
    </location>
    <ligand>
        <name>ATP</name>
        <dbReference type="ChEBI" id="CHEBI:30616"/>
        <label>1</label>
    </ligand>
</feature>
<feature type="binding site" evidence="1">
    <location>
        <position position="241"/>
    </location>
    <ligand>
        <name>ATP</name>
        <dbReference type="ChEBI" id="CHEBI:30616"/>
        <label>1</label>
    </ligand>
</feature>
<feature type="binding site" evidence="1">
    <location>
        <position position="282"/>
    </location>
    <ligand>
        <name>ATP</name>
        <dbReference type="ChEBI" id="CHEBI:30616"/>
        <label>1</label>
    </ligand>
</feature>
<feature type="binding site" evidence="1">
    <location>
        <position position="282"/>
    </location>
    <ligand>
        <name>Mg(2+)</name>
        <dbReference type="ChEBI" id="CHEBI:18420"/>
        <label>1</label>
    </ligand>
</feature>
<feature type="binding site" evidence="1">
    <location>
        <position position="282"/>
    </location>
    <ligand>
        <name>Mn(2+)</name>
        <dbReference type="ChEBI" id="CHEBI:29035"/>
        <label>1</label>
    </ligand>
</feature>
<feature type="binding site" evidence="1">
    <location>
        <position position="294"/>
    </location>
    <ligand>
        <name>ATP</name>
        <dbReference type="ChEBI" id="CHEBI:30616"/>
        <label>1</label>
    </ligand>
</feature>
<feature type="binding site" evidence="1">
    <location>
        <position position="294"/>
    </location>
    <ligand>
        <name>Mg(2+)</name>
        <dbReference type="ChEBI" id="CHEBI:18420"/>
        <label>1</label>
    </ligand>
</feature>
<feature type="binding site" evidence="1">
    <location>
        <position position="294"/>
    </location>
    <ligand>
        <name>Mg(2+)</name>
        <dbReference type="ChEBI" id="CHEBI:18420"/>
        <label>2</label>
    </ligand>
</feature>
<feature type="binding site" evidence="1">
    <location>
        <position position="294"/>
    </location>
    <ligand>
        <name>Mn(2+)</name>
        <dbReference type="ChEBI" id="CHEBI:29035"/>
        <label>1</label>
    </ligand>
</feature>
<feature type="binding site" evidence="1">
    <location>
        <position position="294"/>
    </location>
    <ligand>
        <name>Mn(2+)</name>
        <dbReference type="ChEBI" id="CHEBI:29035"/>
        <label>2</label>
    </ligand>
</feature>
<feature type="binding site" evidence="1">
    <location>
        <position position="296"/>
    </location>
    <ligand>
        <name>Mg(2+)</name>
        <dbReference type="ChEBI" id="CHEBI:18420"/>
        <label>2</label>
    </ligand>
</feature>
<feature type="binding site" evidence="1">
    <location>
        <position position="296"/>
    </location>
    <ligand>
        <name>Mn(2+)</name>
        <dbReference type="ChEBI" id="CHEBI:29035"/>
        <label>2</label>
    </ligand>
</feature>
<feature type="binding site" evidence="1">
    <location>
        <position position="697"/>
    </location>
    <ligand>
        <name>ATP</name>
        <dbReference type="ChEBI" id="CHEBI:30616"/>
        <label>2</label>
    </ligand>
</feature>
<feature type="binding site" evidence="1">
    <location>
        <position position="736"/>
    </location>
    <ligand>
        <name>ATP</name>
        <dbReference type="ChEBI" id="CHEBI:30616"/>
        <label>2</label>
    </ligand>
</feature>
<feature type="binding site" evidence="1">
    <location>
        <position position="738"/>
    </location>
    <ligand>
        <name>ATP</name>
        <dbReference type="ChEBI" id="CHEBI:30616"/>
        <label>2</label>
    </ligand>
</feature>
<feature type="binding site" evidence="1">
    <location>
        <position position="743"/>
    </location>
    <ligand>
        <name>ATP</name>
        <dbReference type="ChEBI" id="CHEBI:30616"/>
        <label>2</label>
    </ligand>
</feature>
<feature type="binding site" evidence="1">
    <location>
        <position position="768"/>
    </location>
    <ligand>
        <name>ATP</name>
        <dbReference type="ChEBI" id="CHEBI:30616"/>
        <label>2</label>
    </ligand>
</feature>
<feature type="binding site" evidence="1">
    <location>
        <position position="769"/>
    </location>
    <ligand>
        <name>ATP</name>
        <dbReference type="ChEBI" id="CHEBI:30616"/>
        <label>2</label>
    </ligand>
</feature>
<feature type="binding site" evidence="1">
    <location>
        <position position="770"/>
    </location>
    <ligand>
        <name>ATP</name>
        <dbReference type="ChEBI" id="CHEBI:30616"/>
        <label>2</label>
    </ligand>
</feature>
<feature type="binding site" evidence="1">
    <location>
        <position position="771"/>
    </location>
    <ligand>
        <name>ATP</name>
        <dbReference type="ChEBI" id="CHEBI:30616"/>
        <label>2</label>
    </ligand>
</feature>
<feature type="binding site" evidence="1">
    <location>
        <position position="811"/>
    </location>
    <ligand>
        <name>ATP</name>
        <dbReference type="ChEBI" id="CHEBI:30616"/>
        <label>2</label>
    </ligand>
</feature>
<feature type="binding site" evidence="1">
    <location>
        <position position="811"/>
    </location>
    <ligand>
        <name>Mg(2+)</name>
        <dbReference type="ChEBI" id="CHEBI:18420"/>
        <label>3</label>
    </ligand>
</feature>
<feature type="binding site" evidence="1">
    <location>
        <position position="811"/>
    </location>
    <ligand>
        <name>Mn(2+)</name>
        <dbReference type="ChEBI" id="CHEBI:29035"/>
        <label>3</label>
    </ligand>
</feature>
<feature type="binding site" evidence="1">
    <location>
        <position position="823"/>
    </location>
    <ligand>
        <name>ATP</name>
        <dbReference type="ChEBI" id="CHEBI:30616"/>
        <label>2</label>
    </ligand>
</feature>
<feature type="binding site" evidence="1">
    <location>
        <position position="823"/>
    </location>
    <ligand>
        <name>Mg(2+)</name>
        <dbReference type="ChEBI" id="CHEBI:18420"/>
        <label>3</label>
    </ligand>
</feature>
<feature type="binding site" evidence="1">
    <location>
        <position position="823"/>
    </location>
    <ligand>
        <name>Mg(2+)</name>
        <dbReference type="ChEBI" id="CHEBI:18420"/>
        <label>4</label>
    </ligand>
</feature>
<feature type="binding site" evidence="1">
    <location>
        <position position="823"/>
    </location>
    <ligand>
        <name>Mn(2+)</name>
        <dbReference type="ChEBI" id="CHEBI:29035"/>
        <label>3</label>
    </ligand>
</feature>
<feature type="binding site" evidence="1">
    <location>
        <position position="823"/>
    </location>
    <ligand>
        <name>Mn(2+)</name>
        <dbReference type="ChEBI" id="CHEBI:29035"/>
        <label>4</label>
    </ligand>
</feature>
<feature type="binding site" evidence="1">
    <location>
        <position position="825"/>
    </location>
    <ligand>
        <name>Mg(2+)</name>
        <dbReference type="ChEBI" id="CHEBI:18420"/>
        <label>4</label>
    </ligand>
</feature>
<feature type="binding site" evidence="1">
    <location>
        <position position="825"/>
    </location>
    <ligand>
        <name>Mn(2+)</name>
        <dbReference type="ChEBI" id="CHEBI:29035"/>
        <label>4</label>
    </ligand>
</feature>
<evidence type="ECO:0000255" key="1">
    <source>
        <dbReference type="HAMAP-Rule" id="MF_01210"/>
    </source>
</evidence>
<organism>
    <name type="scientific">Methanoregula boonei (strain DSM 21154 / JCM 14090 / 6A8)</name>
    <dbReference type="NCBI Taxonomy" id="456442"/>
    <lineage>
        <taxon>Archaea</taxon>
        <taxon>Methanobacteriati</taxon>
        <taxon>Methanobacteriota</taxon>
        <taxon>Stenosarchaea group</taxon>
        <taxon>Methanomicrobia</taxon>
        <taxon>Methanomicrobiales</taxon>
        <taxon>Methanoregulaceae</taxon>
        <taxon>Methanoregula</taxon>
    </lineage>
</organism>
<proteinExistence type="inferred from homology"/>
<name>CARB_METB6</name>